<sequence>MTKGILGKKVGMTQIFTESGEFIPVTVIEATPNVVLQVKTVETDGYEAVQVGFDDKREVLSNKPAKGHVAKANTAPKRFIREFKNIEGLEVGAELSVEQFEAGDVVDVTGTSKGKGFQGVIKRHGQSRGPMAHGSRYHRRPGSMGPVAPNRVFKNKRLAGRMGGNRVTVQNLEIVQVIPEKNVILIKGNVPGAKKSLITIKSAVKAAK</sequence>
<dbReference type="EMBL" id="CP000829">
    <property type="protein sequence ID" value="ACI60404.1"/>
    <property type="molecule type" value="Genomic_DNA"/>
</dbReference>
<dbReference type="SMR" id="B5XJ36"/>
<dbReference type="KEGG" id="soz:Spy49_0045"/>
<dbReference type="HOGENOM" id="CLU_044142_4_1_9"/>
<dbReference type="Proteomes" id="UP000001039">
    <property type="component" value="Chromosome"/>
</dbReference>
<dbReference type="GO" id="GO:0022625">
    <property type="term" value="C:cytosolic large ribosomal subunit"/>
    <property type="evidence" value="ECO:0007669"/>
    <property type="project" value="TreeGrafter"/>
</dbReference>
<dbReference type="GO" id="GO:0019843">
    <property type="term" value="F:rRNA binding"/>
    <property type="evidence" value="ECO:0007669"/>
    <property type="project" value="UniProtKB-UniRule"/>
</dbReference>
<dbReference type="GO" id="GO:0003735">
    <property type="term" value="F:structural constituent of ribosome"/>
    <property type="evidence" value="ECO:0007669"/>
    <property type="project" value="InterPro"/>
</dbReference>
<dbReference type="GO" id="GO:0006412">
    <property type="term" value="P:translation"/>
    <property type="evidence" value="ECO:0007669"/>
    <property type="project" value="UniProtKB-UniRule"/>
</dbReference>
<dbReference type="FunFam" id="2.40.30.10:FF:000004">
    <property type="entry name" value="50S ribosomal protein L3"/>
    <property type="match status" value="1"/>
</dbReference>
<dbReference type="FunFam" id="3.30.160.810:FF:000002">
    <property type="entry name" value="50S ribosomal protein L3"/>
    <property type="match status" value="1"/>
</dbReference>
<dbReference type="Gene3D" id="3.30.160.810">
    <property type="match status" value="1"/>
</dbReference>
<dbReference type="Gene3D" id="2.40.30.10">
    <property type="entry name" value="Translation factors"/>
    <property type="match status" value="1"/>
</dbReference>
<dbReference type="HAMAP" id="MF_01325_B">
    <property type="entry name" value="Ribosomal_uL3_B"/>
    <property type="match status" value="1"/>
</dbReference>
<dbReference type="InterPro" id="IPR000597">
    <property type="entry name" value="Ribosomal_uL3"/>
</dbReference>
<dbReference type="InterPro" id="IPR019927">
    <property type="entry name" value="Ribosomal_uL3_bac/org-type"/>
</dbReference>
<dbReference type="InterPro" id="IPR019926">
    <property type="entry name" value="Ribosomal_uL3_CS"/>
</dbReference>
<dbReference type="InterPro" id="IPR009000">
    <property type="entry name" value="Transl_B-barrel_sf"/>
</dbReference>
<dbReference type="NCBIfam" id="TIGR03625">
    <property type="entry name" value="L3_bact"/>
    <property type="match status" value="1"/>
</dbReference>
<dbReference type="PANTHER" id="PTHR11229">
    <property type="entry name" value="50S RIBOSOMAL PROTEIN L3"/>
    <property type="match status" value="1"/>
</dbReference>
<dbReference type="PANTHER" id="PTHR11229:SF16">
    <property type="entry name" value="LARGE RIBOSOMAL SUBUNIT PROTEIN UL3C"/>
    <property type="match status" value="1"/>
</dbReference>
<dbReference type="Pfam" id="PF00297">
    <property type="entry name" value="Ribosomal_L3"/>
    <property type="match status" value="1"/>
</dbReference>
<dbReference type="SUPFAM" id="SSF50447">
    <property type="entry name" value="Translation proteins"/>
    <property type="match status" value="1"/>
</dbReference>
<dbReference type="PROSITE" id="PS00474">
    <property type="entry name" value="RIBOSOMAL_L3"/>
    <property type="match status" value="1"/>
</dbReference>
<accession>B5XJ36</accession>
<feature type="chain" id="PRO_1000141930" description="Large ribosomal subunit protein uL3">
    <location>
        <begin position="1"/>
        <end position="208"/>
    </location>
</feature>
<feature type="region of interest" description="Disordered" evidence="2">
    <location>
        <begin position="116"/>
        <end position="148"/>
    </location>
</feature>
<organism>
    <name type="scientific">Streptococcus pyogenes serotype M49 (strain NZ131)</name>
    <dbReference type="NCBI Taxonomy" id="471876"/>
    <lineage>
        <taxon>Bacteria</taxon>
        <taxon>Bacillati</taxon>
        <taxon>Bacillota</taxon>
        <taxon>Bacilli</taxon>
        <taxon>Lactobacillales</taxon>
        <taxon>Streptococcaceae</taxon>
        <taxon>Streptococcus</taxon>
    </lineage>
</organism>
<keyword id="KW-0687">Ribonucleoprotein</keyword>
<keyword id="KW-0689">Ribosomal protein</keyword>
<keyword id="KW-0694">RNA-binding</keyword>
<keyword id="KW-0699">rRNA-binding</keyword>
<reference key="1">
    <citation type="journal article" date="2008" name="J. Bacteriol.">
        <title>Genome sequence of a nephritogenic and highly transformable M49 strain of Streptococcus pyogenes.</title>
        <authorList>
            <person name="McShan W.M."/>
            <person name="Ferretti J.J."/>
            <person name="Karasawa T."/>
            <person name="Suvorov A.N."/>
            <person name="Lin S."/>
            <person name="Qin B."/>
            <person name="Jia H."/>
            <person name="Kenton S."/>
            <person name="Najar F."/>
            <person name="Wu H."/>
            <person name="Scott J."/>
            <person name="Roe B.A."/>
            <person name="Savic D.J."/>
        </authorList>
    </citation>
    <scope>NUCLEOTIDE SEQUENCE [LARGE SCALE GENOMIC DNA]</scope>
    <source>
        <strain>NZ131</strain>
    </source>
</reference>
<protein>
    <recommendedName>
        <fullName evidence="1">Large ribosomal subunit protein uL3</fullName>
    </recommendedName>
    <alternativeName>
        <fullName evidence="3">50S ribosomal protein L3</fullName>
    </alternativeName>
</protein>
<proteinExistence type="inferred from homology"/>
<gene>
    <name evidence="1" type="primary">rplC</name>
    <name type="ordered locus">Spy49_0045</name>
</gene>
<name>RL3_STRPZ</name>
<comment type="function">
    <text evidence="1">One of the primary rRNA binding proteins, it binds directly near the 3'-end of the 23S rRNA, where it nucleates assembly of the 50S subunit.</text>
</comment>
<comment type="subunit">
    <text evidence="1">Part of the 50S ribosomal subunit. Forms a cluster with proteins L14 and L19.</text>
</comment>
<comment type="similarity">
    <text evidence="1">Belongs to the universal ribosomal protein uL3 family.</text>
</comment>
<evidence type="ECO:0000255" key="1">
    <source>
        <dbReference type="HAMAP-Rule" id="MF_01325"/>
    </source>
</evidence>
<evidence type="ECO:0000256" key="2">
    <source>
        <dbReference type="SAM" id="MobiDB-lite"/>
    </source>
</evidence>
<evidence type="ECO:0000305" key="3"/>